<keyword id="KW-0963">Cytoplasm</keyword>
<keyword id="KW-0328">Glycosyltransferase</keyword>
<keyword id="KW-0444">Lipid biosynthesis</keyword>
<keyword id="KW-0443">Lipid metabolism</keyword>
<keyword id="KW-0472">Membrane</keyword>
<keyword id="KW-1185">Reference proteome</keyword>
<keyword id="KW-0677">Repeat</keyword>
<keyword id="KW-0752">Steroid biosynthesis</keyword>
<keyword id="KW-0753">Steroid metabolism</keyword>
<keyword id="KW-0756">Sterol biosynthesis</keyword>
<keyword id="KW-1207">Sterol metabolism</keyword>
<keyword id="KW-0808">Transferase</keyword>
<feature type="chain" id="PRO_0000215608" description="Sterol 3-beta-glucosyltransferase">
    <location>
        <begin position="1"/>
        <end position="1585"/>
    </location>
</feature>
<feature type="domain" description="GRAM 1" evidence="2">
    <location>
        <begin position="387"/>
        <end position="555"/>
    </location>
</feature>
<feature type="domain" description="PH" evidence="3">
    <location>
        <begin position="438"/>
        <end position="530"/>
    </location>
</feature>
<feature type="domain" description="GRAM 2" evidence="2">
    <location>
        <begin position="862"/>
        <end position="933"/>
    </location>
</feature>
<feature type="region of interest" description="Disordered" evidence="4">
    <location>
        <begin position="1"/>
        <end position="154"/>
    </location>
</feature>
<feature type="region of interest" description="Disordered" evidence="4">
    <location>
        <begin position="177"/>
        <end position="225"/>
    </location>
</feature>
<feature type="region of interest" description="Disordered" evidence="4">
    <location>
        <begin position="249"/>
        <end position="279"/>
    </location>
</feature>
<feature type="region of interest" description="Disordered" evidence="4">
    <location>
        <begin position="625"/>
        <end position="645"/>
    </location>
</feature>
<feature type="region of interest" description="Disordered" evidence="4">
    <location>
        <begin position="666"/>
        <end position="852"/>
    </location>
</feature>
<feature type="region of interest" description="Disordered" evidence="4">
    <location>
        <begin position="1499"/>
        <end position="1555"/>
    </location>
</feature>
<feature type="compositionally biased region" description="Pro residues" evidence="4">
    <location>
        <begin position="1"/>
        <end position="18"/>
    </location>
</feature>
<feature type="compositionally biased region" description="Polar residues" evidence="4">
    <location>
        <begin position="65"/>
        <end position="77"/>
    </location>
</feature>
<feature type="compositionally biased region" description="Polar residues" evidence="4">
    <location>
        <begin position="105"/>
        <end position="123"/>
    </location>
</feature>
<feature type="compositionally biased region" description="Polar residues" evidence="4">
    <location>
        <begin position="132"/>
        <end position="148"/>
    </location>
</feature>
<feature type="compositionally biased region" description="Acidic residues" evidence="4">
    <location>
        <begin position="178"/>
        <end position="194"/>
    </location>
</feature>
<feature type="compositionally biased region" description="Low complexity" evidence="4">
    <location>
        <begin position="255"/>
        <end position="273"/>
    </location>
</feature>
<feature type="compositionally biased region" description="Basic and acidic residues" evidence="4">
    <location>
        <begin position="670"/>
        <end position="689"/>
    </location>
</feature>
<feature type="compositionally biased region" description="Polar residues" evidence="4">
    <location>
        <begin position="760"/>
        <end position="785"/>
    </location>
</feature>
<feature type="compositionally biased region" description="Polar residues" evidence="4">
    <location>
        <begin position="806"/>
        <end position="817"/>
    </location>
</feature>
<feature type="compositionally biased region" description="Polar residues" evidence="4">
    <location>
        <begin position="827"/>
        <end position="840"/>
    </location>
</feature>
<feature type="compositionally biased region" description="Low complexity" evidence="4">
    <location>
        <begin position="1529"/>
        <end position="1545"/>
    </location>
</feature>
<feature type="binding site" evidence="1">
    <location>
        <position position="1043"/>
    </location>
    <ligand>
        <name>UDP-alpha-D-glucose</name>
        <dbReference type="ChEBI" id="CHEBI:58885"/>
    </ligand>
</feature>
<feature type="binding site" evidence="1">
    <location>
        <position position="1044"/>
    </location>
    <ligand>
        <name>UDP-alpha-D-glucose</name>
        <dbReference type="ChEBI" id="CHEBI:58885"/>
    </ligand>
</feature>
<feature type="binding site" evidence="1">
    <location>
        <position position="1046"/>
    </location>
    <ligand>
        <name>UDP-alpha-D-glucose</name>
        <dbReference type="ChEBI" id="CHEBI:58885"/>
    </ligand>
</feature>
<feature type="binding site" evidence="1">
    <location>
        <position position="1358"/>
    </location>
    <ligand>
        <name>UDP-alpha-D-glucose</name>
        <dbReference type="ChEBI" id="CHEBI:58885"/>
    </ligand>
</feature>
<feature type="binding site" evidence="1">
    <location>
        <position position="1360"/>
    </location>
    <ligand>
        <name>UDP-alpha-D-glucose</name>
        <dbReference type="ChEBI" id="CHEBI:58885"/>
    </ligand>
</feature>
<feature type="binding site" evidence="1">
    <location>
        <position position="1373"/>
    </location>
    <ligand>
        <name>UDP-alpha-D-glucose</name>
        <dbReference type="ChEBI" id="CHEBI:58885"/>
    </ligand>
</feature>
<feature type="binding site" evidence="1">
    <location>
        <position position="1377"/>
    </location>
    <ligand>
        <name>UDP-alpha-D-glucose</name>
        <dbReference type="ChEBI" id="CHEBI:58885"/>
    </ligand>
</feature>
<feature type="binding site" evidence="1">
    <location>
        <position position="1378"/>
    </location>
    <ligand>
        <name>UDP-alpha-D-glucose</name>
        <dbReference type="ChEBI" id="CHEBI:58885"/>
    </ligand>
</feature>
<feature type="binding site" evidence="1">
    <location>
        <position position="1397"/>
    </location>
    <ligand>
        <name>UDP-alpha-D-glucose</name>
        <dbReference type="ChEBI" id="CHEBI:58885"/>
    </ligand>
</feature>
<feature type="binding site" evidence="1">
    <location>
        <position position="1398"/>
    </location>
    <ligand>
        <name>UDP-alpha-D-glucose</name>
        <dbReference type="ChEBI" id="CHEBI:58885"/>
    </ligand>
</feature>
<evidence type="ECO:0000250" key="1">
    <source>
        <dbReference type="UniProtKB" id="Q06321"/>
    </source>
</evidence>
<evidence type="ECO:0000255" key="2"/>
<evidence type="ECO:0000255" key="3">
    <source>
        <dbReference type="PROSITE-ProRule" id="PRU00145"/>
    </source>
</evidence>
<evidence type="ECO:0000256" key="4">
    <source>
        <dbReference type="SAM" id="MobiDB-lite"/>
    </source>
</evidence>
<evidence type="ECO:0000305" key="5"/>
<organism>
    <name type="scientific">Cryptococcus neoformans var. neoformans serotype D (strain JEC21 / ATCC MYA-565)</name>
    <name type="common">Filobasidiella neoformans</name>
    <dbReference type="NCBI Taxonomy" id="214684"/>
    <lineage>
        <taxon>Eukaryota</taxon>
        <taxon>Fungi</taxon>
        <taxon>Dikarya</taxon>
        <taxon>Basidiomycota</taxon>
        <taxon>Agaricomycotina</taxon>
        <taxon>Tremellomycetes</taxon>
        <taxon>Tremellales</taxon>
        <taxon>Cryptococcaceae</taxon>
        <taxon>Cryptococcus</taxon>
        <taxon>Cryptococcus neoformans species complex</taxon>
    </lineage>
</organism>
<reference key="1">
    <citation type="journal article" date="2005" name="Science">
        <title>The genome of the basidiomycetous yeast and human pathogen Cryptococcus neoformans.</title>
        <authorList>
            <person name="Loftus B.J."/>
            <person name="Fung E."/>
            <person name="Roncaglia P."/>
            <person name="Rowley D."/>
            <person name="Amedeo P."/>
            <person name="Bruno D."/>
            <person name="Vamathevan J."/>
            <person name="Miranda M."/>
            <person name="Anderson I.J."/>
            <person name="Fraser J.A."/>
            <person name="Allen J.E."/>
            <person name="Bosdet I.E."/>
            <person name="Brent M.R."/>
            <person name="Chiu R."/>
            <person name="Doering T.L."/>
            <person name="Donlin M.J."/>
            <person name="D'Souza C.A."/>
            <person name="Fox D.S."/>
            <person name="Grinberg V."/>
            <person name="Fu J."/>
            <person name="Fukushima M."/>
            <person name="Haas B.J."/>
            <person name="Huang J.C."/>
            <person name="Janbon G."/>
            <person name="Jones S.J.M."/>
            <person name="Koo H.L."/>
            <person name="Krzywinski M.I."/>
            <person name="Kwon-Chung K.J."/>
            <person name="Lengeler K.B."/>
            <person name="Maiti R."/>
            <person name="Marra M.A."/>
            <person name="Marra R.E."/>
            <person name="Mathewson C.A."/>
            <person name="Mitchell T.G."/>
            <person name="Pertea M."/>
            <person name="Riggs F.R."/>
            <person name="Salzberg S.L."/>
            <person name="Schein J.E."/>
            <person name="Shvartsbeyn A."/>
            <person name="Shin H."/>
            <person name="Shumway M."/>
            <person name="Specht C.A."/>
            <person name="Suh B.B."/>
            <person name="Tenney A."/>
            <person name="Utterback T.R."/>
            <person name="Wickes B.L."/>
            <person name="Wortman J.R."/>
            <person name="Wye N.H."/>
            <person name="Kronstad J.W."/>
            <person name="Lodge J.K."/>
            <person name="Heitman J."/>
            <person name="Davis R.W."/>
            <person name="Fraser C.M."/>
            <person name="Hyman R.W."/>
        </authorList>
    </citation>
    <scope>NUCLEOTIDE SEQUENCE [LARGE SCALE GENOMIC DNA]</scope>
    <source>
        <strain>JEC21 / ATCC MYA-565</strain>
    </source>
</reference>
<protein>
    <recommendedName>
        <fullName evidence="5">Sterol 3-beta-glucosyltransferase</fullName>
        <ecNumber evidence="1">2.4.1.-</ecNumber>
        <ecNumber evidence="1">2.4.1.173</ecNumber>
    </recommendedName>
    <alternativeName>
        <fullName evidence="1">Autophagy-related protein 26</fullName>
    </alternativeName>
</protein>
<comment type="function">
    <text evidence="1">Sterol glycosyltransferase responsible for the glycosylation of ergosterol to form ergosterol-glucoside.</text>
</comment>
<comment type="catalytic activity">
    <reaction evidence="1">
        <text>a sterol + UDP-alpha-D-glucose = a sterol 3-beta-D-glucoside + UDP + H(+)</text>
        <dbReference type="Rhea" id="RHEA:22724"/>
        <dbReference type="ChEBI" id="CHEBI:15378"/>
        <dbReference type="ChEBI" id="CHEBI:15889"/>
        <dbReference type="ChEBI" id="CHEBI:37424"/>
        <dbReference type="ChEBI" id="CHEBI:58223"/>
        <dbReference type="ChEBI" id="CHEBI:58885"/>
        <dbReference type="EC" id="2.4.1.173"/>
    </reaction>
    <physiologicalReaction direction="left-to-right" evidence="1">
        <dbReference type="Rhea" id="RHEA:22725"/>
    </physiologicalReaction>
</comment>
<comment type="catalytic activity">
    <reaction evidence="1">
        <text>ergosterol + UDP-alpha-D-glucose = ergosteryl 3-beta-D-glucoside + UDP + H(+)</text>
        <dbReference type="Rhea" id="RHEA:61836"/>
        <dbReference type="ChEBI" id="CHEBI:15378"/>
        <dbReference type="ChEBI" id="CHEBI:16933"/>
        <dbReference type="ChEBI" id="CHEBI:52973"/>
        <dbReference type="ChEBI" id="CHEBI:58223"/>
        <dbReference type="ChEBI" id="CHEBI:58885"/>
    </reaction>
    <physiologicalReaction direction="left-to-right" evidence="1">
        <dbReference type="Rhea" id="RHEA:61837"/>
    </physiologicalReaction>
</comment>
<comment type="subcellular location">
    <subcellularLocation>
        <location evidence="1">Cytoplasm</location>
    </subcellularLocation>
    <subcellularLocation>
        <location evidence="1">Membrane</location>
        <topology evidence="1">Peripheral membrane protein</topology>
    </subcellularLocation>
</comment>
<comment type="similarity">
    <text evidence="5">Belongs to the glycosyltransferase 28 family.</text>
</comment>
<proteinExistence type="inferred from homology"/>
<gene>
    <name evidence="1" type="primary">ATG26</name>
    <name type="ordered locus">CNC04500</name>
</gene>
<dbReference type="EC" id="2.4.1.-" evidence="1"/>
<dbReference type="EC" id="2.4.1.173" evidence="1"/>
<dbReference type="EMBL" id="AE017343">
    <property type="status" value="NOT_ANNOTATED_CDS"/>
    <property type="molecule type" value="Genomic_DNA"/>
</dbReference>
<dbReference type="SMR" id="P0CN90"/>
<dbReference type="STRING" id="214684.P0CN90"/>
<dbReference type="CAZy" id="GT1">
    <property type="family name" value="Glycosyltransferase Family 1"/>
</dbReference>
<dbReference type="PaxDb" id="214684-P0CN90"/>
<dbReference type="eggNOG" id="KOG1192">
    <property type="taxonomic scope" value="Eukaryota"/>
</dbReference>
<dbReference type="InParanoid" id="P0CN90"/>
<dbReference type="Proteomes" id="UP000002149">
    <property type="component" value="Chromosome 3"/>
</dbReference>
<dbReference type="GO" id="GO:0005737">
    <property type="term" value="C:cytoplasm"/>
    <property type="evidence" value="ECO:0007669"/>
    <property type="project" value="UniProtKB-SubCell"/>
</dbReference>
<dbReference type="GO" id="GO:0016020">
    <property type="term" value="C:membrane"/>
    <property type="evidence" value="ECO:0007669"/>
    <property type="project" value="UniProtKB-SubCell"/>
</dbReference>
<dbReference type="GO" id="GO:0016906">
    <property type="term" value="F:sterol 3-beta-glucosyltransferase activity"/>
    <property type="evidence" value="ECO:0007669"/>
    <property type="project" value="UniProtKB-EC"/>
</dbReference>
<dbReference type="GO" id="GO:0008194">
    <property type="term" value="F:UDP-glycosyltransferase activity"/>
    <property type="evidence" value="ECO:0000318"/>
    <property type="project" value="GO_Central"/>
</dbReference>
<dbReference type="GO" id="GO:0005975">
    <property type="term" value="P:carbohydrate metabolic process"/>
    <property type="evidence" value="ECO:0007669"/>
    <property type="project" value="InterPro"/>
</dbReference>
<dbReference type="GO" id="GO:0030259">
    <property type="term" value="P:lipid glycosylation"/>
    <property type="evidence" value="ECO:0007669"/>
    <property type="project" value="InterPro"/>
</dbReference>
<dbReference type="GO" id="GO:0016126">
    <property type="term" value="P:sterol biosynthetic process"/>
    <property type="evidence" value="ECO:0007669"/>
    <property type="project" value="UniProtKB-KW"/>
</dbReference>
<dbReference type="GO" id="GO:0016125">
    <property type="term" value="P:sterol metabolic process"/>
    <property type="evidence" value="ECO:0000318"/>
    <property type="project" value="GO_Central"/>
</dbReference>
<dbReference type="CDD" id="cd03784">
    <property type="entry name" value="GT1_Gtf-like"/>
    <property type="match status" value="1"/>
</dbReference>
<dbReference type="CDD" id="cd13215">
    <property type="entry name" value="PH-GRAM1_AGT26"/>
    <property type="match status" value="1"/>
</dbReference>
<dbReference type="CDD" id="cd13216">
    <property type="entry name" value="PH-GRAM2_AGT26"/>
    <property type="match status" value="1"/>
</dbReference>
<dbReference type="FunFam" id="2.30.29.30:FF:000303">
    <property type="entry name" value="Sterol 3-beta-glucosyltransferase"/>
    <property type="match status" value="1"/>
</dbReference>
<dbReference type="FunFam" id="2.30.29.30:FF:000606">
    <property type="entry name" value="Sterol 3-beta-glucosyltransferase"/>
    <property type="match status" value="1"/>
</dbReference>
<dbReference type="FunFam" id="3.40.50.2000:FF:000029">
    <property type="entry name" value="Sterol 3-beta-glucosyltransferase"/>
    <property type="match status" value="1"/>
</dbReference>
<dbReference type="FunFam" id="3.40.50.2000:FF:000009">
    <property type="entry name" value="Sterol 3-beta-glucosyltransferase UGT80A2"/>
    <property type="match status" value="1"/>
</dbReference>
<dbReference type="Gene3D" id="3.40.50.2000">
    <property type="entry name" value="Glycogen Phosphorylase B"/>
    <property type="match status" value="2"/>
</dbReference>
<dbReference type="Gene3D" id="2.30.29.30">
    <property type="entry name" value="Pleckstrin-homology domain (PH domain)/Phosphotyrosine-binding domain (PTB)"/>
    <property type="match status" value="2"/>
</dbReference>
<dbReference type="InterPro" id="IPR048066">
    <property type="entry name" value="ATG26_PH_GRAM1"/>
</dbReference>
<dbReference type="InterPro" id="IPR048065">
    <property type="entry name" value="ATG26_PH_GRAM2"/>
</dbReference>
<dbReference type="InterPro" id="IPR010610">
    <property type="entry name" value="EryCIII-like_C"/>
</dbReference>
<dbReference type="InterPro" id="IPR050426">
    <property type="entry name" value="Glycosyltransferase_28"/>
</dbReference>
<dbReference type="InterPro" id="IPR004276">
    <property type="entry name" value="GlycoTrans_28_N"/>
</dbReference>
<dbReference type="InterPro" id="IPR004182">
    <property type="entry name" value="GRAM"/>
</dbReference>
<dbReference type="InterPro" id="IPR011993">
    <property type="entry name" value="PH-like_dom_sf"/>
</dbReference>
<dbReference type="InterPro" id="IPR001849">
    <property type="entry name" value="PH_domain"/>
</dbReference>
<dbReference type="InterPro" id="IPR002213">
    <property type="entry name" value="UDP_glucos_trans"/>
</dbReference>
<dbReference type="PANTHER" id="PTHR48050">
    <property type="entry name" value="STEROL 3-BETA-GLUCOSYLTRANSFERASE"/>
    <property type="match status" value="1"/>
</dbReference>
<dbReference type="PANTHER" id="PTHR48050:SF25">
    <property type="entry name" value="STEROL 3-BETA-GLUCOSYLTRANSFERASE"/>
    <property type="match status" value="1"/>
</dbReference>
<dbReference type="Pfam" id="PF06722">
    <property type="entry name" value="EryCIII-like_C"/>
    <property type="match status" value="1"/>
</dbReference>
<dbReference type="Pfam" id="PF03033">
    <property type="entry name" value="Glyco_transf_28"/>
    <property type="match status" value="1"/>
</dbReference>
<dbReference type="Pfam" id="PF02893">
    <property type="entry name" value="GRAM"/>
    <property type="match status" value="2"/>
</dbReference>
<dbReference type="Pfam" id="PF00169">
    <property type="entry name" value="PH"/>
    <property type="match status" value="1"/>
</dbReference>
<dbReference type="SMART" id="SM00568">
    <property type="entry name" value="GRAM"/>
    <property type="match status" value="2"/>
</dbReference>
<dbReference type="SMART" id="SM00233">
    <property type="entry name" value="PH"/>
    <property type="match status" value="1"/>
</dbReference>
<dbReference type="SUPFAM" id="SSF50729">
    <property type="entry name" value="PH domain-like"/>
    <property type="match status" value="1"/>
</dbReference>
<dbReference type="SUPFAM" id="SSF53756">
    <property type="entry name" value="UDP-Glycosyltransferase/glycogen phosphorylase"/>
    <property type="match status" value="1"/>
</dbReference>
<dbReference type="PROSITE" id="PS50003">
    <property type="entry name" value="PH_DOMAIN"/>
    <property type="match status" value="1"/>
</dbReference>
<sequence>MSPPISPTPPPLQPPFPPTAIARGPDRPDPPPQHQQAAESLVNAAAQHVAPTCPPTSDELPQMEDQATNSSNDSLIPSRQAPDQEETENAITAGTPPDEMEPTKDAQTVRFSSSSPASYSTHEYPTEGINEPRTSSRAPNTASSQMAESSCDFRSSRDIGSIRMGASALVSALNALPWEEDDDSDDGEDDDEFIEPARGSSSTIYERKQRPQTPSTSHGFHPTHTLHFPFRQNAIARRACQPGTTELDYQYATPETSSRRTSAAGSESSSEGEVPLPKGFVSHPNLIVPSGEGEAAAHPDPKLISDRITKEQQIADVEEQAEILRSAEEQEMRLGKEFVPPKSRDSADLNVDAALREGGSEREDVIEEQMQTNEAEKRLTRNEKLAERLMEVFGLEEREEVLEEMKCWLLRSVMLKGYMYLTKRHICFFANMPNENNLLVKSGPLHKKASRSKLNTKFWVVLKNDVLSWYESTSDPYFPKGNISLQYCHSCDAVSGTRFKVRTSERNYTFTADTESSRDEWVKAIQKVMFKTQHEGETIKLIIPLEAIVDVEKSPTLEFTETIEVKCIDAEDQMSVDSYFFASFPDNDYAFSAIQKLVRERPSPPELPRISSVTTIHANQEPLDTSHATIKRHGTDSSAEKLGMASHRPFRKISSVLKPLILKSSDGEPLEEHSQGPHHNDEDASHLPHIEAISNRRRSEEESDNDYFDGYPPRQVGPPPPSMNDDARNWRPSWIRKPASKLFGSSPSGSFVSHPGRLPTDSSTTVTESGPSLRSRTGRTKQASVTEVMEPPIQYEEEVSEDEMSNKPSVVDSNSAETARKRAARLSWTSETSSGSQMVKSKSDFSMLGSESGHSESAETVRKFRTFFALSDKEELIDHFPGYLYRVLPVSGRFFISTNYFCFRSSQLLYKTKESFRLMIIPIRDLYGLKAQKAFRFGHSGLTVVIKGHEEIFIEFRSASRRKACIALLEERMEAVRLSGENTIVDSHKIEARIMEDLDESTPVEPKSPWPVSPSPLFGSTTSTSFLEFKPEPMKITCLTIGSRGDVQPYIALCKGLQAEGHITKIATHGEYKAWVEGHGIAFESVGGDPAELMQMCVDNGMFTVSFLKEGLQKFRGWLDDLLNSSWEACQGSDLLIESPSAMSGIHVAEALRIPYYRAFTMPWTRTRAYPHAFAVPEHGRGGPYNYMTYTMFDQVFWRAISGQVNRWRRNVLGLDATTFDKMEQHKVPFLYNFSPTVVPPPLDWTEWIHVTGYWFLDKADEKQGEKSWTPPQGLVDFIDKAHGEEKKVVYIGFGSIVVSDPEEMTRCVVEAVVNSGVCAILSKGWSDRGSKKGEPKGDSEGADGVKYPPEIFAIDSIDHGWLFPRIDAACHHGGAGTTGASLRAGIPTIIKPFFGDQAFWAERVESLNVGSSIRRLTSHQLASALIKATTDEKQISKARVVGEMIRKENGITRAIEAIYRDLEYAKSIIKSLPSTDDRTPERISSHLHPLTTADLSFNRVRSRSRSRSRSSQGRFSPRRHTVDDDGWSVVSGGSRSRSGSASAVTSPERRPLNIGSALGSHVFKTALLPNTFGKWRNLEEGDDR</sequence>
<accession>P0CN90</accession>
<accession>Q55W70</accession>
<accession>Q5KK25</accession>
<name>ATG26_CRYNJ</name>